<comment type="function">
    <text evidence="2">Component of the ubiquinol-cytochrome c reductase complex (complex III or cytochrome b-c1 complex) that is part of the mitochondrial respiratory chain. The b-c1 complex mediates electron transfer from ubiquinol to cytochrome c. Contributes to the generation of a proton gradient across the mitochondrial membrane that is then used for ATP synthesis.</text>
</comment>
<comment type="cofactor">
    <cofactor evidence="2">
        <name>heme b</name>
        <dbReference type="ChEBI" id="CHEBI:60344"/>
    </cofactor>
    <text evidence="2">Binds 2 heme b groups non-covalently.</text>
</comment>
<comment type="subunit">
    <text evidence="2">The cytochrome bc1 complex contains 3 respiratory subunits (MT-CYB, CYC1 and UQCRFS1), 2 core proteins (UQCRC1 and UQCRC2) and probably 6 low-molecular weight proteins.</text>
</comment>
<comment type="subcellular location">
    <subcellularLocation>
        <location evidence="2">Mitochondrion inner membrane</location>
        <topology evidence="2">Multi-pass membrane protein</topology>
    </subcellularLocation>
</comment>
<comment type="miscellaneous">
    <text evidence="1">Heme 1 (or BL or b562) is low-potential and absorbs at about 562 nm, and heme 2 (or BH or b566) is high-potential and absorbs at about 566 nm.</text>
</comment>
<comment type="similarity">
    <text evidence="3 4">Belongs to the cytochrome b family.</text>
</comment>
<comment type="caution">
    <text evidence="2">The full-length protein contains only eight transmembrane helices, not nine as predicted by bioinformatics tools.</text>
</comment>
<geneLocation type="mitochondrion"/>
<accession>Q33772</accession>
<proteinExistence type="inferred from homology"/>
<dbReference type="EMBL" id="AB021782">
    <property type="protein sequence ID" value="BAB20305.1"/>
    <property type="molecule type" value="Genomic_DNA"/>
</dbReference>
<dbReference type="EMBL" id="AF074864">
    <property type="protein sequence ID" value="AAD13146.1"/>
    <property type="molecule type" value="Genomic_DNA"/>
</dbReference>
<dbReference type="EMBL" id="AP007244">
    <property type="protein sequence ID" value="BAD78126.1"/>
    <property type="molecule type" value="Genomic_DNA"/>
</dbReference>
<dbReference type="RefSeq" id="YP_163971.1">
    <property type="nucleotide sequence ID" value="NC_006542.1"/>
</dbReference>
<dbReference type="SMR" id="Q33772"/>
<dbReference type="GeneID" id="3190417"/>
<dbReference type="CTD" id="4519"/>
<dbReference type="GO" id="GO:0005743">
    <property type="term" value="C:mitochondrial inner membrane"/>
    <property type="evidence" value="ECO:0007669"/>
    <property type="project" value="UniProtKB-SubCell"/>
</dbReference>
<dbReference type="GO" id="GO:0045275">
    <property type="term" value="C:respiratory chain complex III"/>
    <property type="evidence" value="ECO:0007669"/>
    <property type="project" value="InterPro"/>
</dbReference>
<dbReference type="GO" id="GO:0046872">
    <property type="term" value="F:metal ion binding"/>
    <property type="evidence" value="ECO:0007669"/>
    <property type="project" value="UniProtKB-KW"/>
</dbReference>
<dbReference type="GO" id="GO:0008121">
    <property type="term" value="F:ubiquinol-cytochrome-c reductase activity"/>
    <property type="evidence" value="ECO:0007669"/>
    <property type="project" value="InterPro"/>
</dbReference>
<dbReference type="GO" id="GO:0006122">
    <property type="term" value="P:mitochondrial electron transport, ubiquinol to cytochrome c"/>
    <property type="evidence" value="ECO:0007669"/>
    <property type="project" value="TreeGrafter"/>
</dbReference>
<dbReference type="CDD" id="cd00290">
    <property type="entry name" value="cytochrome_b_C"/>
    <property type="match status" value="1"/>
</dbReference>
<dbReference type="CDD" id="cd00284">
    <property type="entry name" value="Cytochrome_b_N"/>
    <property type="match status" value="1"/>
</dbReference>
<dbReference type="FunFam" id="1.20.810.10:FF:000002">
    <property type="entry name" value="Cytochrome b"/>
    <property type="match status" value="1"/>
</dbReference>
<dbReference type="Gene3D" id="1.20.810.10">
    <property type="entry name" value="Cytochrome Bc1 Complex, Chain C"/>
    <property type="match status" value="1"/>
</dbReference>
<dbReference type="InterPro" id="IPR005798">
    <property type="entry name" value="Cyt_b/b6_C"/>
</dbReference>
<dbReference type="InterPro" id="IPR036150">
    <property type="entry name" value="Cyt_b/b6_C_sf"/>
</dbReference>
<dbReference type="InterPro" id="IPR005797">
    <property type="entry name" value="Cyt_b/b6_N"/>
</dbReference>
<dbReference type="InterPro" id="IPR027387">
    <property type="entry name" value="Cytb/b6-like_sf"/>
</dbReference>
<dbReference type="InterPro" id="IPR030689">
    <property type="entry name" value="Cytochrome_b"/>
</dbReference>
<dbReference type="InterPro" id="IPR048260">
    <property type="entry name" value="Cytochrome_b_C_euk/bac"/>
</dbReference>
<dbReference type="InterPro" id="IPR048259">
    <property type="entry name" value="Cytochrome_b_N_euk/bac"/>
</dbReference>
<dbReference type="InterPro" id="IPR016174">
    <property type="entry name" value="Di-haem_cyt_TM"/>
</dbReference>
<dbReference type="PANTHER" id="PTHR19271">
    <property type="entry name" value="CYTOCHROME B"/>
    <property type="match status" value="1"/>
</dbReference>
<dbReference type="PANTHER" id="PTHR19271:SF16">
    <property type="entry name" value="CYTOCHROME B"/>
    <property type="match status" value="1"/>
</dbReference>
<dbReference type="Pfam" id="PF00032">
    <property type="entry name" value="Cytochrom_B_C"/>
    <property type="match status" value="1"/>
</dbReference>
<dbReference type="Pfam" id="PF00033">
    <property type="entry name" value="Cytochrome_B"/>
    <property type="match status" value="1"/>
</dbReference>
<dbReference type="PIRSF" id="PIRSF038885">
    <property type="entry name" value="COB"/>
    <property type="match status" value="1"/>
</dbReference>
<dbReference type="SUPFAM" id="SSF81648">
    <property type="entry name" value="a domain/subunit of cytochrome bc1 complex (Ubiquinol-cytochrome c reductase)"/>
    <property type="match status" value="1"/>
</dbReference>
<dbReference type="SUPFAM" id="SSF81342">
    <property type="entry name" value="Transmembrane di-heme cytochromes"/>
    <property type="match status" value="1"/>
</dbReference>
<dbReference type="PROSITE" id="PS51003">
    <property type="entry name" value="CYTB_CTER"/>
    <property type="match status" value="1"/>
</dbReference>
<dbReference type="PROSITE" id="PS51002">
    <property type="entry name" value="CYTB_NTER"/>
    <property type="match status" value="1"/>
</dbReference>
<organism>
    <name type="scientific">Anguilla mossambica</name>
    <name type="common">African longfin eel</name>
    <name type="synonym">Muraena mossambica</name>
    <dbReference type="NCBI Taxonomy" id="48164"/>
    <lineage>
        <taxon>Eukaryota</taxon>
        <taxon>Metazoa</taxon>
        <taxon>Chordata</taxon>
        <taxon>Craniata</taxon>
        <taxon>Vertebrata</taxon>
        <taxon>Euteleostomi</taxon>
        <taxon>Actinopterygii</taxon>
        <taxon>Neopterygii</taxon>
        <taxon>Teleostei</taxon>
        <taxon>Anguilliformes</taxon>
        <taxon>Anguillidae</taxon>
        <taxon>Anguilla</taxon>
    </lineage>
</organism>
<keyword id="KW-0249">Electron transport</keyword>
<keyword id="KW-0349">Heme</keyword>
<keyword id="KW-0408">Iron</keyword>
<keyword id="KW-0472">Membrane</keyword>
<keyword id="KW-0479">Metal-binding</keyword>
<keyword id="KW-0496">Mitochondrion</keyword>
<keyword id="KW-0999">Mitochondrion inner membrane</keyword>
<keyword id="KW-0679">Respiratory chain</keyword>
<keyword id="KW-0812">Transmembrane</keyword>
<keyword id="KW-1133">Transmembrane helix</keyword>
<keyword id="KW-0813">Transport</keyword>
<keyword id="KW-0830">Ubiquinone</keyword>
<feature type="chain" id="PRO_0000060581" description="Cytochrome b">
    <location>
        <begin position="1"/>
        <end position="379"/>
    </location>
</feature>
<feature type="transmembrane region" description="Helical" evidence="2">
    <location>
        <begin position="33"/>
        <end position="53"/>
    </location>
</feature>
<feature type="transmembrane region" description="Helical" evidence="2">
    <location>
        <begin position="77"/>
        <end position="98"/>
    </location>
</feature>
<feature type="transmembrane region" description="Helical" evidence="2">
    <location>
        <begin position="113"/>
        <end position="133"/>
    </location>
</feature>
<feature type="transmembrane region" description="Helical" evidence="2">
    <location>
        <begin position="178"/>
        <end position="198"/>
    </location>
</feature>
<feature type="transmembrane region" description="Helical" evidence="2">
    <location>
        <begin position="226"/>
        <end position="246"/>
    </location>
</feature>
<feature type="transmembrane region" description="Helical" evidence="2">
    <location>
        <begin position="288"/>
        <end position="308"/>
    </location>
</feature>
<feature type="transmembrane region" description="Helical" evidence="2">
    <location>
        <begin position="320"/>
        <end position="340"/>
    </location>
</feature>
<feature type="transmembrane region" description="Helical" evidence="2">
    <location>
        <begin position="347"/>
        <end position="367"/>
    </location>
</feature>
<feature type="binding site" description="axial binding residue" evidence="2">
    <location>
        <position position="83"/>
    </location>
    <ligand>
        <name>heme b</name>
        <dbReference type="ChEBI" id="CHEBI:60344"/>
        <label>b562</label>
    </ligand>
    <ligandPart>
        <name>Fe</name>
        <dbReference type="ChEBI" id="CHEBI:18248"/>
    </ligandPart>
</feature>
<feature type="binding site" description="axial binding residue" evidence="2">
    <location>
        <position position="97"/>
    </location>
    <ligand>
        <name>heme b</name>
        <dbReference type="ChEBI" id="CHEBI:60344"/>
        <label>b566</label>
    </ligand>
    <ligandPart>
        <name>Fe</name>
        <dbReference type="ChEBI" id="CHEBI:18248"/>
    </ligandPart>
</feature>
<feature type="binding site" description="axial binding residue" evidence="2">
    <location>
        <position position="182"/>
    </location>
    <ligand>
        <name>heme b</name>
        <dbReference type="ChEBI" id="CHEBI:60344"/>
        <label>b562</label>
    </ligand>
    <ligandPart>
        <name>Fe</name>
        <dbReference type="ChEBI" id="CHEBI:18248"/>
    </ligandPart>
</feature>
<feature type="binding site" description="axial binding residue" evidence="2">
    <location>
        <position position="196"/>
    </location>
    <ligand>
        <name>heme b</name>
        <dbReference type="ChEBI" id="CHEBI:60344"/>
        <label>b566</label>
    </ligand>
    <ligandPart>
        <name>Fe</name>
        <dbReference type="ChEBI" id="CHEBI:18248"/>
    </ligandPart>
</feature>
<feature type="binding site" evidence="2">
    <location>
        <position position="201"/>
    </location>
    <ligand>
        <name>a ubiquinone</name>
        <dbReference type="ChEBI" id="CHEBI:16389"/>
    </ligand>
</feature>
<gene>
    <name type="primary">mt-cyb</name>
    <name type="synonym">cob</name>
    <name type="synonym">cytb</name>
    <name type="synonym">mtcyb</name>
</gene>
<sequence length="379" mass="42611">MANLRKTHPLLKIANDALVDLPTPSNISAWWNFGSLLGLCLISQILTGLFLAMHYTSDISTAFSSVAHICRDVNYGWLIRNLHANGASFFFICLYLHIARGLYYGSYLYKETWNIGVVLFLLVMMTAFVGYVLPWGQMSFWGATVITNLLSAVPYVGDSLVQWIWGGFSVDNATLTRFFAFHFLFPFVVAGATMLHLLFLHETGSNNPVGLNSDADKIPFHPYFSYKDLLGFIIMLTALTMLALFYPNLLGDPDNFTPANPMVTPPHIKPEWYFLFAYAILRSIPNKLGGVLALLSSILVLMVVPILHTSKQRGLTFRPISQLLFWILVADMLVLTWIGGMPVEHPYIIIGQVASVLYFSLFLVLNPLVGWLENKVMNW</sequence>
<evidence type="ECO:0000250" key="1"/>
<evidence type="ECO:0000250" key="2">
    <source>
        <dbReference type="UniProtKB" id="P00157"/>
    </source>
</evidence>
<evidence type="ECO:0000255" key="3">
    <source>
        <dbReference type="PROSITE-ProRule" id="PRU00967"/>
    </source>
</evidence>
<evidence type="ECO:0000255" key="4">
    <source>
        <dbReference type="PROSITE-ProRule" id="PRU00968"/>
    </source>
</evidence>
<protein>
    <recommendedName>
        <fullName>Cytochrome b</fullName>
    </recommendedName>
    <alternativeName>
        <fullName>Complex III subunit 3</fullName>
    </alternativeName>
    <alternativeName>
        <fullName>Complex III subunit III</fullName>
    </alternativeName>
    <alternativeName>
        <fullName>Cytochrome b-c1 complex subunit 3</fullName>
    </alternativeName>
    <alternativeName>
        <fullName>Ubiquinol-cytochrome-c reductase complex cytochrome b subunit</fullName>
    </alternativeName>
</protein>
<reference key="1">
    <citation type="thesis" date="1998" institute="Ocean Research Institute / University of Tokyo" country="Japan">
        <title>Molecular phylogeny and evolution of the freshwater eels, genus Anguilla.</title>
        <authorList>
            <person name="Aoyama J."/>
        </authorList>
    </citation>
    <scope>NUCLEOTIDE SEQUENCE [GENOMIC DNA]</scope>
    <source>
        <tissue>Liver</tissue>
    </source>
</reference>
<reference key="2">
    <citation type="journal article" date="2001" name="Mol. Phylogenet. Evol.">
        <title>A phylogeny of freshwater eels inferred from mitochondrial genes.</title>
        <authorList>
            <person name="Lin Y.S."/>
            <person name="Poh Y.P."/>
            <person name="Tzeng C.S."/>
        </authorList>
    </citation>
    <scope>NUCLEOTIDE SEQUENCE [GENOMIC DNA]</scope>
</reference>
<reference key="3">
    <citation type="journal article" date="2005" name="Mol. Phylogenet. Evol.">
        <title>Molecular phylogeny and evolution of the freshwater eels genus Anguilla based on the whole mitochondrial genome sequences.</title>
        <authorList>
            <person name="Minegishi Y."/>
            <person name="Aoyama J."/>
            <person name="Inoue J.G."/>
            <person name="Miya M."/>
            <person name="Nishida M."/>
            <person name="Tsukamoto K."/>
        </authorList>
    </citation>
    <scope>NUCLEOTIDE SEQUENCE [GENOMIC DNA]</scope>
</reference>
<name>CYB_ANGMO</name>